<comment type="subcellular location">
    <subcellularLocation>
        <location evidence="2">Secreted</location>
        <location evidence="2">Cell wall</location>
    </subcellularLocation>
</comment>
<comment type="PTM">
    <text evidence="1">O-glycosylated.</text>
</comment>
<organism>
    <name type="scientific">Phaseolus vulgaris</name>
    <name type="common">Kidney bean</name>
    <name type="synonym">French bean</name>
    <dbReference type="NCBI Taxonomy" id="3885"/>
    <lineage>
        <taxon>Eukaryota</taxon>
        <taxon>Viridiplantae</taxon>
        <taxon>Streptophyta</taxon>
        <taxon>Embryophyta</taxon>
        <taxon>Tracheophyta</taxon>
        <taxon>Spermatophyta</taxon>
        <taxon>Magnoliopsida</taxon>
        <taxon>eudicotyledons</taxon>
        <taxon>Gunneridae</taxon>
        <taxon>Pentapetalae</taxon>
        <taxon>rosids</taxon>
        <taxon>fabids</taxon>
        <taxon>Fabales</taxon>
        <taxon>Fabaceae</taxon>
        <taxon>Papilionoideae</taxon>
        <taxon>50 kb inversion clade</taxon>
        <taxon>NPAAA clade</taxon>
        <taxon>indigoferoid/millettioid clade</taxon>
        <taxon>Phaseoleae</taxon>
        <taxon>Phaseolus</taxon>
    </lineage>
</organism>
<evidence type="ECO:0000269" key="1">
    <source>
    </source>
</evidence>
<evidence type="ECO:0000269" key="2">
    <source>
    </source>
</evidence>
<evidence type="ECO:0000305" key="3"/>
<evidence type="ECO:0000312" key="4">
    <source>
        <dbReference type="PIR" id="S59482"/>
    </source>
</evidence>
<reference evidence="3 4" key="1">
    <citation type="journal article" date="1995" name="Plant Mol. Biol.">
        <title>Specificity in the immobilisation of cell wall proteins in response to different elicitor molecules in suspension-cultured cells of French bean (Phaseolus vulgaris L.).</title>
        <authorList>
            <person name="Wojtaszek P."/>
            <person name="Trethowan J."/>
            <person name="Bolwell G.P."/>
        </authorList>
    </citation>
    <scope>PROTEIN SEQUENCE</scope>
    <scope>GLYCOSYLATION</scope>
    <scope>HYDROXYLATION AT PRO-8; PRO-9; PRO-10; PRO-11; PRO-12; PRO-17; PRO-18; PRO-19; PRO-20; PRO-26; PRO-27; PRO-28 AND PRO-29</scope>
    <source>
        <strain evidence="1">cv. The Prince</strain>
    </source>
</reference>
<reference evidence="3" key="2">
    <citation type="journal article" date="1997" name="J. Biol. Chem.">
        <title>Differential extraction and protein sequencing reveals major differences in patterns of primary cell wall proteins from plants.</title>
        <authorList>
            <person name="Robertson D."/>
            <person name="Mitchell G.P."/>
            <person name="Gilroy J.S."/>
            <person name="Gerrish C."/>
            <person name="Bolwell G.P."/>
            <person name="Slabas A.R."/>
        </authorList>
    </citation>
    <scope>PROTEIN SEQUENCE OF 1-16</scope>
    <scope>SUBCELLULAR LOCATION</scope>
    <scope>HYDROXYLATION AT PRO-8; PRO-9; PRO-10; PRO-11 AND PRO-12</scope>
</reference>
<sequence length="30" mass="3331">NHYSYSSPPPPPVVSSPPPPYYYYSPPPPV</sequence>
<name>CWP04_PHAVU</name>
<proteinExistence type="evidence at protein level"/>
<protein>
    <recommendedName>
        <fullName>136 kDa hydroxyproline-rich cell wall glycoprotein, major component</fullName>
    </recommendedName>
</protein>
<accession>Q7M1I4</accession>
<accession>P80763</accession>
<dbReference type="PIR" id="S59482">
    <property type="entry name" value="S59482"/>
</dbReference>
<dbReference type="GO" id="GO:0005576">
    <property type="term" value="C:extracellular region"/>
    <property type="evidence" value="ECO:0007669"/>
    <property type="project" value="UniProtKB-KW"/>
</dbReference>
<feature type="chain" id="PRO_0000079633" description="136 kDa hydroxyproline-rich cell wall glycoprotein, major component">
    <location>
        <begin position="1"/>
        <end position="30" status="greater than"/>
    </location>
</feature>
<feature type="modified residue" description="4-hydroxyproline" evidence="1 2">
    <location>
        <position position="8"/>
    </location>
</feature>
<feature type="modified residue" description="4-hydroxyproline" evidence="1 2">
    <location>
        <position position="9"/>
    </location>
</feature>
<feature type="modified residue" description="4-hydroxyproline" evidence="1 2">
    <location>
        <position position="10"/>
    </location>
</feature>
<feature type="modified residue" description="4-hydroxyproline" evidence="1 2">
    <location>
        <position position="11"/>
    </location>
</feature>
<feature type="modified residue" description="4-hydroxyproline" evidence="1 2">
    <location>
        <position position="12"/>
    </location>
</feature>
<feature type="modified residue" description="4-hydroxyproline" evidence="1">
    <location>
        <position position="17"/>
    </location>
</feature>
<feature type="modified residue" description="4-hydroxyproline" evidence="1">
    <location>
        <position position="18"/>
    </location>
</feature>
<feature type="modified residue" description="4-hydroxyproline" evidence="1">
    <location>
        <position position="19"/>
    </location>
</feature>
<feature type="modified residue" description="4-hydroxyproline" evidence="1">
    <location>
        <position position="20"/>
    </location>
</feature>
<feature type="modified residue" description="4-hydroxyproline" evidence="1">
    <location>
        <position position="26"/>
    </location>
</feature>
<feature type="modified residue" description="4-hydroxyproline" evidence="1">
    <location>
        <position position="27"/>
    </location>
</feature>
<feature type="modified residue" description="4-hydroxyproline" evidence="1">
    <location>
        <position position="28"/>
    </location>
</feature>
<feature type="modified residue" description="4-hydroxyproline" evidence="1">
    <location>
        <position position="29"/>
    </location>
</feature>
<feature type="non-terminal residue" evidence="4">
    <location>
        <position position="30"/>
    </location>
</feature>
<keyword id="KW-0134">Cell wall</keyword>
<keyword id="KW-0903">Direct protein sequencing</keyword>
<keyword id="KW-0325">Glycoprotein</keyword>
<keyword id="KW-0379">Hydroxylation</keyword>
<keyword id="KW-0964">Secreted</keyword>